<keyword id="KW-0072">Autophagy</keyword>
<keyword id="KW-0963">Cytoplasm</keyword>
<keyword id="KW-0968">Cytoplasmic vesicle</keyword>
<keyword id="KW-0206">Cytoskeleton</keyword>
<keyword id="KW-0256">Endoplasmic reticulum</keyword>
<keyword id="KW-0333">Golgi apparatus</keyword>
<keyword id="KW-0449">Lipoprotein</keyword>
<keyword id="KW-0472">Membrane</keyword>
<keyword id="KW-0493">Microtubule</keyword>
<keyword id="KW-1185">Reference proteome</keyword>
<evidence type="ECO:0000250" key="1">
    <source>
        <dbReference type="UniProtKB" id="Q0VGK0"/>
    </source>
</evidence>
<evidence type="ECO:0000250" key="2">
    <source>
        <dbReference type="UniProtKB" id="Q8R3R8"/>
    </source>
</evidence>
<evidence type="ECO:0000250" key="3">
    <source>
        <dbReference type="UniProtKB" id="Q9H0R8"/>
    </source>
</evidence>
<evidence type="ECO:0000305" key="4"/>
<organism>
    <name type="scientific">Cavia porcellus</name>
    <name type="common">Guinea pig</name>
    <dbReference type="NCBI Taxonomy" id="10141"/>
    <lineage>
        <taxon>Eukaryota</taxon>
        <taxon>Metazoa</taxon>
        <taxon>Chordata</taxon>
        <taxon>Craniata</taxon>
        <taxon>Vertebrata</taxon>
        <taxon>Euteleostomi</taxon>
        <taxon>Mammalia</taxon>
        <taxon>Eutheria</taxon>
        <taxon>Euarchontoglires</taxon>
        <taxon>Glires</taxon>
        <taxon>Rodentia</taxon>
        <taxon>Hystricomorpha</taxon>
        <taxon>Caviidae</taxon>
        <taxon>Cavia</taxon>
    </lineage>
</organism>
<comment type="function">
    <text evidence="3">Ubiquitin-like modifier that increases cell-surface expression of kappa-type opioid receptor through facilitating anterograde intracellular trafficking of the receptor. Involved in formation of autophagosomal vacuoles. While LC3s are involved in elongation of the phagophore membrane, the GABARAP/GATE-16 subfamily is essential for a later stage in autophagosome maturation. Through its interaction with the reticulophagy receptor TEX264, participates in the remodeling of subdomains of the endoplasmic reticulum into autophagosomes upon nutrient stress, which then fuse with lysosomes for endoplasmic reticulum turnover.</text>
</comment>
<comment type="subunit">
    <text evidence="2 3">Interacts with ATG13, OPRK1, RB1CC1 and ULK1. Interacts with TP53INP1 and TP53INP2. Directly interacts with SQSTM1. Interacts with ATG3, ATG7 and MAP15. Interacts with TECPR2. Interacts with TBC1D5. Interacts with MAPK15. Interacts with TRIM5. Interacts with MEFV and TRIM21. Interacts with WDFY3. Interacts with the reticulophagy receptor TEX264. Interacts with UBA5. Interacts with KBTBD6 and KBTBD7; the interaction is direct. Interacts with reticulophagy regulators RETREG1, RETREG2 and RETREG3. Interacts with IRGM (By similarity). Interacts with DNM2 (By similarity). Interacts with NCOA4 (via C-terminus) (By similarity).</text>
</comment>
<comment type="subcellular location">
    <subcellularLocation>
        <location evidence="3">Cytoplasmic vesicle</location>
        <location evidence="3">Autophagosome</location>
    </subcellularLocation>
    <subcellularLocation>
        <location evidence="3">Cytoplasmic vesicle membrane</location>
        <topology evidence="3">Lipid-anchor</topology>
    </subcellularLocation>
    <subcellularLocation>
        <location evidence="1">Cytoplasm</location>
        <location evidence="1">Cytoskeleton</location>
    </subcellularLocation>
    <subcellularLocation>
        <location evidence="1">Endoplasmic reticulum</location>
    </subcellularLocation>
    <subcellularLocation>
        <location evidence="1">Golgi apparatus</location>
    </subcellularLocation>
</comment>
<comment type="PTM">
    <text evidence="2 3">The precursor molecule is cleaved by ATG4 (ATG4A, ATG4B, ATG4C or ATG4D) to expose the glycine at the C-terminus and form the cytosolic form, GABARAPL1-I. The processed form is then activated by APG7L/ATG7, transferred to ATG3 and conjugated to phosphatidylethanolamine (PE) phospholipid to form the membrane-bound form, GABARAPL1-II. During non-canonical autophagy, the processed form is conjugated to phosphatidylserine (PS) phospholipid. ATG4 proteins also mediate the delipidation of PE-conjugated forms required for GABARAPL1 recycling when autophagosomes fuse with lysosomes. In addition, ATG4B and ATG4D mediate delipidation of ATG8 proteins conjugated to PS during non-canonical autophagy. ATG4B constitutes the major protein for proteolytic activation (By similarity). ATG4D is the main enzyme for delipidation activity (By similarity).</text>
</comment>
<comment type="similarity">
    <text evidence="4">Belongs to the ATG8 family.</text>
</comment>
<name>GBRL1_CAVPO</name>
<reference key="1">
    <citation type="journal article" date="1993" name="Mol. Cell. Endocrinol.">
        <title>Identification and characterization of an early estrogen-regulated RNA in cultured guinea-pig endometrial cells.</title>
        <authorList>
            <person name="Pellerin I."/>
            <person name="Vuillermoz C."/>
            <person name="Jouvenot M."/>
            <person name="Ordener C."/>
            <person name="Royez M."/>
            <person name="Adessi G.L."/>
        </authorList>
    </citation>
    <scope>NUCLEOTIDE SEQUENCE [MRNA]</scope>
    <source>
        <strain>Hartley</strain>
    </source>
</reference>
<reference key="2">
    <citation type="journal article" date="2001" name="Biochem. Biophys. Res. Commun.">
        <title>A novel early estrogen-regulated gene gec1 encodes a protein related to GABARAP.</title>
        <authorList>
            <person name="Vernier-Magnin S."/>
            <person name="Muller S."/>
            <person name="Sallot M."/>
            <person name="Radom J."/>
            <person name="Musard J.-F."/>
            <person name="Adami P."/>
            <person name="Dulieu P."/>
            <person name="Remy-Martin J.-P."/>
            <person name="Jouvenot M."/>
            <person name="Fraichard A."/>
        </authorList>
    </citation>
    <scope>NUCLEOTIDE SEQUENCE [GENOMIC DNA / MRNA]</scope>
    <scope>TISSUE SPECIFICITY</scope>
    <source>
        <strain>Hartley</strain>
    </source>
</reference>
<feature type="chain" id="PRO_0000212368" description="Gamma-aminobutyric acid receptor-associated protein-like 1">
    <location>
        <begin position="1"/>
        <end position="116"/>
    </location>
</feature>
<feature type="propeptide" id="PRO_0000420207" description="Removed in mature form" evidence="3">
    <location>
        <position position="117"/>
    </location>
</feature>
<feature type="site" description="Cleavage; by ATG4B" evidence="3">
    <location>
        <begin position="116"/>
        <end position="117"/>
    </location>
</feature>
<feature type="lipid moiety-binding region" description="Phosphatidylethanolamine amidated glycine; alternate" evidence="3">
    <location>
        <position position="116"/>
    </location>
</feature>
<feature type="lipid moiety-binding region" description="Phosphatidylserine amidated glycine; alternate" evidence="3">
    <location>
        <position position="116"/>
    </location>
</feature>
<protein>
    <recommendedName>
        <fullName evidence="3">Gamma-aminobutyric acid receptor-associated protein-like 1</fullName>
    </recommendedName>
    <alternativeName>
        <fullName>GABA(A) receptor-associated protein-like 1</fullName>
    </alternativeName>
    <alternativeName>
        <fullName>Glandular epithelial cell protein 1</fullName>
        <shortName>GEC-1</shortName>
    </alternativeName>
</protein>
<accession>P60518</accession>
<accession>Q9JJ97</accession>
<proteinExistence type="evidence at transcript level"/>
<sequence>MKFQYKEDHPFEYRKKEGEKIRKKYPDRVPVIVEKAPKARVPDLDKRKYLVPSDLTVGQFYFLIRKRIHLRPEDALFFFVNNTIPPTSATMGQLYEDNHEEDYFLYVAYSDESVYGK</sequence>
<gene>
    <name evidence="3" type="primary">GABARAPL1</name>
    <name type="synonym">GEC1</name>
</gene>
<dbReference type="EMBL" id="AF012920">
    <property type="protein sequence ID" value="AAL32264.1"/>
    <property type="molecule type" value="mRNA"/>
</dbReference>
<dbReference type="EMBL" id="AF312680">
    <property type="protein sequence ID" value="AAK28484.1"/>
    <property type="molecule type" value="Genomic_DNA"/>
</dbReference>
<dbReference type="PIR" id="JC7698">
    <property type="entry name" value="JC7698"/>
</dbReference>
<dbReference type="RefSeq" id="NP_001166421.1">
    <property type="nucleotide sequence ID" value="NM_001172950.1"/>
</dbReference>
<dbReference type="BMRB" id="P60518"/>
<dbReference type="SMR" id="P60518"/>
<dbReference type="FunCoup" id="P60518">
    <property type="interactions" value="1297"/>
</dbReference>
<dbReference type="STRING" id="10141.ENSCPOP00000006053"/>
<dbReference type="Ensembl" id="ENSCPOT00000006786.3">
    <property type="protein sequence ID" value="ENSCPOP00000006053.2"/>
    <property type="gene ID" value="ENSCPOG00000006718.4"/>
</dbReference>
<dbReference type="GeneID" id="100135524"/>
<dbReference type="KEGG" id="cpoc:100135524"/>
<dbReference type="CTD" id="23710"/>
<dbReference type="VEuPathDB" id="HostDB:ENSCPOG00000006718"/>
<dbReference type="eggNOG" id="KOG1654">
    <property type="taxonomic scope" value="Eukaryota"/>
</dbReference>
<dbReference type="GeneTree" id="ENSGT00940000156876"/>
<dbReference type="HOGENOM" id="CLU_119276_0_3_1"/>
<dbReference type="InParanoid" id="P60518"/>
<dbReference type="OMA" id="KNQIRAK"/>
<dbReference type="OrthoDB" id="6738456at2759"/>
<dbReference type="TreeFam" id="TF314556"/>
<dbReference type="Proteomes" id="UP000005447">
    <property type="component" value="Unassembled WGS sequence"/>
</dbReference>
<dbReference type="Bgee" id="ENSCPOG00000006718">
    <property type="expression patterns" value="Expressed in cerebellum and 13 other cell types or tissues"/>
</dbReference>
<dbReference type="GO" id="GO:0005776">
    <property type="term" value="C:autophagosome"/>
    <property type="evidence" value="ECO:0007669"/>
    <property type="project" value="UniProtKB-SubCell"/>
</dbReference>
<dbReference type="GO" id="GO:0036064">
    <property type="term" value="C:ciliary basal body"/>
    <property type="evidence" value="ECO:0007669"/>
    <property type="project" value="Ensembl"/>
</dbReference>
<dbReference type="GO" id="GO:0030659">
    <property type="term" value="C:cytoplasmic vesicle membrane"/>
    <property type="evidence" value="ECO:0007669"/>
    <property type="project" value="UniProtKB-SubCell"/>
</dbReference>
<dbReference type="GO" id="GO:0005829">
    <property type="term" value="C:cytosol"/>
    <property type="evidence" value="ECO:0007669"/>
    <property type="project" value="Ensembl"/>
</dbReference>
<dbReference type="GO" id="GO:0005783">
    <property type="term" value="C:endoplasmic reticulum"/>
    <property type="evidence" value="ECO:0007669"/>
    <property type="project" value="UniProtKB-SubCell"/>
</dbReference>
<dbReference type="GO" id="GO:0005794">
    <property type="term" value="C:Golgi apparatus"/>
    <property type="evidence" value="ECO:0007669"/>
    <property type="project" value="UniProtKB-SubCell"/>
</dbReference>
<dbReference type="GO" id="GO:0005874">
    <property type="term" value="C:microtubule"/>
    <property type="evidence" value="ECO:0007669"/>
    <property type="project" value="UniProtKB-KW"/>
</dbReference>
<dbReference type="GO" id="GO:0005739">
    <property type="term" value="C:mitochondrion"/>
    <property type="evidence" value="ECO:0007669"/>
    <property type="project" value="Ensembl"/>
</dbReference>
<dbReference type="GO" id="GO:0005886">
    <property type="term" value="C:plasma membrane"/>
    <property type="evidence" value="ECO:0007669"/>
    <property type="project" value="Ensembl"/>
</dbReference>
<dbReference type="GO" id="GO:0005543">
    <property type="term" value="F:phospholipid binding"/>
    <property type="evidence" value="ECO:0007669"/>
    <property type="project" value="Ensembl"/>
</dbReference>
<dbReference type="GO" id="GO:0030957">
    <property type="term" value="F:Tat protein binding"/>
    <property type="evidence" value="ECO:0007669"/>
    <property type="project" value="Ensembl"/>
</dbReference>
<dbReference type="GO" id="GO:0031625">
    <property type="term" value="F:ubiquitin protein ligase binding"/>
    <property type="evidence" value="ECO:0007669"/>
    <property type="project" value="Ensembl"/>
</dbReference>
<dbReference type="GO" id="GO:0061723">
    <property type="term" value="P:glycophagy"/>
    <property type="evidence" value="ECO:0007669"/>
    <property type="project" value="Ensembl"/>
</dbReference>
<dbReference type="CDD" id="cd16127">
    <property type="entry name" value="Ubl_ATG8_GABARAP_like"/>
    <property type="match status" value="1"/>
</dbReference>
<dbReference type="FunFam" id="3.10.20.90:FF:000037">
    <property type="entry name" value="Gamma-aminobutyric acid receptor-associated protein-like 1"/>
    <property type="match status" value="1"/>
</dbReference>
<dbReference type="Gene3D" id="3.10.20.90">
    <property type="entry name" value="Phosphatidylinositol 3-kinase Catalytic Subunit, Chain A, domain 1"/>
    <property type="match status" value="1"/>
</dbReference>
<dbReference type="InterPro" id="IPR004241">
    <property type="entry name" value="Atg8-like"/>
</dbReference>
<dbReference type="InterPro" id="IPR029071">
    <property type="entry name" value="Ubiquitin-like_domsf"/>
</dbReference>
<dbReference type="PANTHER" id="PTHR10969">
    <property type="entry name" value="MICROTUBULE-ASSOCIATED PROTEINS 1A/1B LIGHT CHAIN 3-RELATED"/>
    <property type="match status" value="1"/>
</dbReference>
<dbReference type="Pfam" id="PF02991">
    <property type="entry name" value="ATG8"/>
    <property type="match status" value="1"/>
</dbReference>
<dbReference type="SUPFAM" id="SSF54236">
    <property type="entry name" value="Ubiquitin-like"/>
    <property type="match status" value="1"/>
</dbReference>